<comment type="function">
    <text evidence="1">E1 component of the 2-oxoglutarate dehydrogenase (OGDH) complex which catalyzes the decarboxylation of 2-oxoglutarate, the first step in the conversion of 2-oxoglutarate to succinyl-CoA and CO(2).</text>
</comment>
<comment type="catalytic activity">
    <reaction evidence="1">
        <text>N(6)-[(R)-lipoyl]-L-lysyl-[protein] + 2-oxoglutarate + H(+) = N(6)-[(R)-S(8)-succinyldihydrolipoyl]-L-lysyl-[protein] + CO2</text>
        <dbReference type="Rhea" id="RHEA:12188"/>
        <dbReference type="Rhea" id="RHEA-COMP:10474"/>
        <dbReference type="Rhea" id="RHEA-COMP:20092"/>
        <dbReference type="ChEBI" id="CHEBI:15378"/>
        <dbReference type="ChEBI" id="CHEBI:16526"/>
        <dbReference type="ChEBI" id="CHEBI:16810"/>
        <dbReference type="ChEBI" id="CHEBI:83099"/>
        <dbReference type="ChEBI" id="CHEBI:83120"/>
        <dbReference type="EC" id="1.2.4.2"/>
    </reaction>
</comment>
<comment type="cofactor">
    <cofactor evidence="1">
        <name>thiamine diphosphate</name>
        <dbReference type="ChEBI" id="CHEBI:58937"/>
    </cofactor>
</comment>
<comment type="subunit">
    <text evidence="1">Homodimer. Part of the 2-oxoglutarate dehydrogenase (OGDH) complex composed of E1 (2-oxoglutarate dehydrogenase), E2 (dihydrolipoamide succinyltransferase) and E3 (dihydrolipoamide dehydrogenase); the complex contains multiple copies of the three enzymatic components (E1, E2 and E3).</text>
</comment>
<comment type="similarity">
    <text evidence="1">Belongs to the alpha-ketoglutarate dehydrogenase family.</text>
</comment>
<dbReference type="EC" id="1.2.4.2" evidence="1"/>
<dbReference type="EMBL" id="AJ938182">
    <property type="protein sequence ID" value="CAI80958.1"/>
    <property type="molecule type" value="Genomic_DNA"/>
</dbReference>
<dbReference type="RefSeq" id="WP_000180686.1">
    <property type="nucleotide sequence ID" value="NC_007622.1"/>
</dbReference>
<dbReference type="SMR" id="Q2YY05"/>
<dbReference type="KEGG" id="sab:SAB1269c"/>
<dbReference type="HOGENOM" id="CLU_004709_1_0_9"/>
<dbReference type="GO" id="GO:0005829">
    <property type="term" value="C:cytosol"/>
    <property type="evidence" value="ECO:0007669"/>
    <property type="project" value="TreeGrafter"/>
</dbReference>
<dbReference type="GO" id="GO:0045252">
    <property type="term" value="C:oxoglutarate dehydrogenase complex"/>
    <property type="evidence" value="ECO:0007669"/>
    <property type="project" value="TreeGrafter"/>
</dbReference>
<dbReference type="GO" id="GO:0004591">
    <property type="term" value="F:oxoglutarate dehydrogenase (succinyl-transferring) activity"/>
    <property type="evidence" value="ECO:0007669"/>
    <property type="project" value="UniProtKB-UniRule"/>
</dbReference>
<dbReference type="GO" id="GO:0030976">
    <property type="term" value="F:thiamine pyrophosphate binding"/>
    <property type="evidence" value="ECO:0007669"/>
    <property type="project" value="UniProtKB-UniRule"/>
</dbReference>
<dbReference type="GO" id="GO:0006096">
    <property type="term" value="P:glycolytic process"/>
    <property type="evidence" value="ECO:0007669"/>
    <property type="project" value="UniProtKB-UniRule"/>
</dbReference>
<dbReference type="GO" id="GO:0006099">
    <property type="term" value="P:tricarboxylic acid cycle"/>
    <property type="evidence" value="ECO:0007669"/>
    <property type="project" value="TreeGrafter"/>
</dbReference>
<dbReference type="CDD" id="cd02016">
    <property type="entry name" value="TPP_E1_OGDC_like"/>
    <property type="match status" value="1"/>
</dbReference>
<dbReference type="FunFam" id="3.40.50.11610:FF:000002">
    <property type="entry name" value="2-oxoglutarate dehydrogenase E1 component"/>
    <property type="match status" value="1"/>
</dbReference>
<dbReference type="FunFam" id="3.40.50.970:FF:000036">
    <property type="entry name" value="2-oxoglutarate dehydrogenase E1 component"/>
    <property type="match status" value="1"/>
</dbReference>
<dbReference type="Gene3D" id="3.40.50.12470">
    <property type="match status" value="1"/>
</dbReference>
<dbReference type="Gene3D" id="3.40.50.970">
    <property type="match status" value="1"/>
</dbReference>
<dbReference type="Gene3D" id="3.40.50.11610">
    <property type="entry name" value="Multifunctional 2-oxoglutarate metabolism enzyme, C-terminal domain"/>
    <property type="match status" value="1"/>
</dbReference>
<dbReference type="Gene3D" id="1.10.287.1150">
    <property type="entry name" value="TPP helical domain"/>
    <property type="match status" value="1"/>
</dbReference>
<dbReference type="HAMAP" id="MF_01169">
    <property type="entry name" value="SucA_OdhA"/>
    <property type="match status" value="1"/>
</dbReference>
<dbReference type="InterPro" id="IPR011603">
    <property type="entry name" value="2oxoglutarate_DH_E1"/>
</dbReference>
<dbReference type="InterPro" id="IPR023784">
    <property type="entry name" value="2oxoglutarate_DH_E1_bac"/>
</dbReference>
<dbReference type="InterPro" id="IPR001017">
    <property type="entry name" value="DH_E1"/>
</dbReference>
<dbReference type="InterPro" id="IPR042179">
    <property type="entry name" value="KGD_C_sf"/>
</dbReference>
<dbReference type="InterPro" id="IPR031717">
    <property type="entry name" value="ODO-1/KGD_C"/>
</dbReference>
<dbReference type="InterPro" id="IPR029061">
    <property type="entry name" value="THDP-binding"/>
</dbReference>
<dbReference type="InterPro" id="IPR005475">
    <property type="entry name" value="Transketolase-like_Pyr-bd"/>
</dbReference>
<dbReference type="NCBIfam" id="TIGR00239">
    <property type="entry name" value="2oxo_dh_E1"/>
    <property type="match status" value="1"/>
</dbReference>
<dbReference type="NCBIfam" id="NF006914">
    <property type="entry name" value="PRK09404.1"/>
    <property type="match status" value="1"/>
</dbReference>
<dbReference type="NCBIfam" id="NF008907">
    <property type="entry name" value="PRK12270.1"/>
    <property type="match status" value="1"/>
</dbReference>
<dbReference type="PANTHER" id="PTHR23152:SF4">
    <property type="entry name" value="2-OXOADIPATE DEHYDROGENASE COMPLEX COMPONENT E1"/>
    <property type="match status" value="1"/>
</dbReference>
<dbReference type="PANTHER" id="PTHR23152">
    <property type="entry name" value="2-OXOGLUTARATE DEHYDROGENASE"/>
    <property type="match status" value="1"/>
</dbReference>
<dbReference type="Pfam" id="PF00676">
    <property type="entry name" value="E1_dh"/>
    <property type="match status" value="1"/>
</dbReference>
<dbReference type="Pfam" id="PF16870">
    <property type="entry name" value="OxoGdeHyase_C"/>
    <property type="match status" value="1"/>
</dbReference>
<dbReference type="Pfam" id="PF02779">
    <property type="entry name" value="Transket_pyr"/>
    <property type="match status" value="1"/>
</dbReference>
<dbReference type="PIRSF" id="PIRSF000157">
    <property type="entry name" value="Oxoglu_dh_E1"/>
    <property type="match status" value="1"/>
</dbReference>
<dbReference type="SMART" id="SM00861">
    <property type="entry name" value="Transket_pyr"/>
    <property type="match status" value="1"/>
</dbReference>
<dbReference type="SUPFAM" id="SSF52518">
    <property type="entry name" value="Thiamin diphosphate-binding fold (THDP-binding)"/>
    <property type="match status" value="2"/>
</dbReference>
<evidence type="ECO:0000255" key="1">
    <source>
        <dbReference type="HAMAP-Rule" id="MF_01169"/>
    </source>
</evidence>
<reference key="1">
    <citation type="journal article" date="2007" name="PLoS ONE">
        <title>Molecular correlates of host specialization in Staphylococcus aureus.</title>
        <authorList>
            <person name="Herron-Olson L."/>
            <person name="Fitzgerald J.R."/>
            <person name="Musser J.M."/>
            <person name="Kapur V."/>
        </authorList>
    </citation>
    <scope>NUCLEOTIDE SEQUENCE [LARGE SCALE GENOMIC DNA]</scope>
    <source>
        <strain>bovine RF122 / ET3-1</strain>
    </source>
</reference>
<accession>Q2YY05</accession>
<organism>
    <name type="scientific">Staphylococcus aureus (strain bovine RF122 / ET3-1)</name>
    <dbReference type="NCBI Taxonomy" id="273036"/>
    <lineage>
        <taxon>Bacteria</taxon>
        <taxon>Bacillati</taxon>
        <taxon>Bacillota</taxon>
        <taxon>Bacilli</taxon>
        <taxon>Bacillales</taxon>
        <taxon>Staphylococcaceae</taxon>
        <taxon>Staphylococcus</taxon>
    </lineage>
</organism>
<sequence length="932" mass="105364">MTNERKEVSEAPVNFGANLGLMLDLYDDFLQDPSSVPEDLQVLFSTIKNDDSIVPSLKSTSSQNSDGTIKRVMRLIDNIRQYGHLKADIYPVNPPKRKHVPKLEIEDFDLDQQTLEGISAGIVSDHFADIYDNAYEAILRMEKRYKGPIAFEYTHINNNTERGWLKRRIETPYKVTLNNNEKRALFKQLAYVEGFEKYLHKNFVGAKRFSIEGVDALVPMLQRTITIAAKEGIKNIQIGMAHRGRLNVLTHVLEKPYEMMISEFMHTDPMKFLPEDGSLQLTAGWTGDVKYHLGGIKTTDSYGTMQRIALANNPSHLEIVAPVVEGRTRAAQDDTQRAGAPTTDHHKAMPIIIHGDGAYPGQGINFETMNLGNLKGYSTGGSLHIITNNRIGFTTEPIDARSTTYSTDVAKGYDVPIFHVNADDVEATIEAIDIAMEFRKEFHKDVVIDLVGYRRFGHNEMDEPSITNPVPYQNIRKNDSVEYVFGKKLVNEGVISEDEMHSFIEQVQKELRQAHDKINKADKMDNPDMEKPAELALPLQADEQSFTFDHLKEINDALLTYPDGFNILKKLNKVLKKRHEPFNKEDGLVDWAQAEQLAFATILQDGTPIRLTGQDSERGTFSHRHAVLHDEQTGETYTPLHHVPNQKATFDIHNSPLSEAAVVGFEYGYNVENKKSFNIWEAQYGDFANMSQMIFDNFLFSSRSKWGERSGLTLFLPHAYEGQGPEHSSARLERFLQLAAENNCTVVNLSSSSNYFHLLRAQAASLDSEQMRPLVVMSPKSLLRNKTVAKPIDEFTSGGFEPILTESYQADKVTKVILATGKMFIDLKEALAKNPDESVLLVAIERLYPFPEEEIETLLAQLPNLEEVSWVQEEPKNQGAWLYVYPYVKVLVADKYDLSYHGRIQRAAPAEGDGEIHKLVQNKIIENALKNN</sequence>
<feature type="chain" id="PRO_1000065704" description="2-oxoglutarate dehydrogenase E1 component">
    <location>
        <begin position="1"/>
        <end position="932"/>
    </location>
</feature>
<keyword id="KW-0324">Glycolysis</keyword>
<keyword id="KW-0560">Oxidoreductase</keyword>
<keyword id="KW-0786">Thiamine pyrophosphate</keyword>
<proteinExistence type="inferred from homology"/>
<name>ODO1_STAAB</name>
<protein>
    <recommendedName>
        <fullName evidence="1">2-oxoglutarate dehydrogenase E1 component</fullName>
        <ecNumber evidence="1">1.2.4.2</ecNumber>
    </recommendedName>
    <alternativeName>
        <fullName evidence="1">Alpha-ketoglutarate dehydrogenase</fullName>
    </alternativeName>
</protein>
<gene>
    <name evidence="1" type="primary">odhA</name>
    <name type="ordered locus">SAB1269c</name>
</gene>